<reference key="1">
    <citation type="journal article" date="2003" name="Science">
        <title>A genomic view of the human-Bacteroides thetaiotaomicron symbiosis.</title>
        <authorList>
            <person name="Xu J."/>
            <person name="Bjursell M.K."/>
            <person name="Himrod J."/>
            <person name="Deng S."/>
            <person name="Carmichael L.K."/>
            <person name="Chiang H.C."/>
            <person name="Hooper L.V."/>
            <person name="Gordon J.I."/>
        </authorList>
    </citation>
    <scope>NUCLEOTIDE SEQUENCE [LARGE SCALE GENOMIC DNA]</scope>
    <source>
        <strain>ATCC 29148 / DSM 2079 / JCM 5827 / CCUG 10774 / NCTC 10582 / VPI-5482 / E50</strain>
    </source>
</reference>
<evidence type="ECO:0000255" key="1">
    <source>
        <dbReference type="HAMAP-Rule" id="MF_02126"/>
    </source>
</evidence>
<sequence>MNRITAYIRQSLQDIYPPEEVKALSMLICCDMLGVDALDIYMGKDIILSACKQRELENIIFRLQKNEPIQYIRGYAEFCGRNFRVAPGVLIPRPETAELVDLIVKENPDARRLLDIGTGSGCIAISLDKNLPDAKVDAWDISEEALAIARKNNEELDAQVTFRRQDVFSADGIQGTSYDIIVSNPPYVTETEKTEMEANVLDWEPELALFVPDEDPLRFYRRIAELGRELLRPGGKLYFEINQAYGQDMIRMIEMNQYRDVRVIKDIFGKDRILTANR</sequence>
<dbReference type="EC" id="2.1.1.297" evidence="1"/>
<dbReference type="EMBL" id="AE015928">
    <property type="protein sequence ID" value="AAO78834.1"/>
    <property type="molecule type" value="Genomic_DNA"/>
</dbReference>
<dbReference type="RefSeq" id="NP_812640.1">
    <property type="nucleotide sequence ID" value="NC_004663.1"/>
</dbReference>
<dbReference type="RefSeq" id="WP_008766986.1">
    <property type="nucleotide sequence ID" value="NC_004663.1"/>
</dbReference>
<dbReference type="SMR" id="Q8A1D7"/>
<dbReference type="FunCoup" id="Q8A1D7">
    <property type="interactions" value="169"/>
</dbReference>
<dbReference type="STRING" id="226186.BT_3729"/>
<dbReference type="PaxDb" id="226186-BT_3729"/>
<dbReference type="EnsemblBacteria" id="AAO78834">
    <property type="protein sequence ID" value="AAO78834"/>
    <property type="gene ID" value="BT_3729"/>
</dbReference>
<dbReference type="GeneID" id="60924898"/>
<dbReference type="KEGG" id="bth:BT_3729"/>
<dbReference type="PATRIC" id="fig|226186.12.peg.3790"/>
<dbReference type="eggNOG" id="COG2890">
    <property type="taxonomic scope" value="Bacteria"/>
</dbReference>
<dbReference type="HOGENOM" id="CLU_018398_3_2_10"/>
<dbReference type="InParanoid" id="Q8A1D7"/>
<dbReference type="OrthoDB" id="9800643at2"/>
<dbReference type="Proteomes" id="UP000001414">
    <property type="component" value="Chromosome"/>
</dbReference>
<dbReference type="GO" id="GO:0003676">
    <property type="term" value="F:nucleic acid binding"/>
    <property type="evidence" value="ECO:0007669"/>
    <property type="project" value="InterPro"/>
</dbReference>
<dbReference type="GO" id="GO:0102559">
    <property type="term" value="F:protein-(glutamine-N5) methyltransferase activity"/>
    <property type="evidence" value="ECO:0007669"/>
    <property type="project" value="UniProtKB-EC"/>
</dbReference>
<dbReference type="GO" id="GO:0036009">
    <property type="term" value="F:protein-glutamine N-methyltransferase activity"/>
    <property type="evidence" value="ECO:0000318"/>
    <property type="project" value="GO_Central"/>
</dbReference>
<dbReference type="GO" id="GO:0032259">
    <property type="term" value="P:methylation"/>
    <property type="evidence" value="ECO:0007669"/>
    <property type="project" value="UniProtKB-KW"/>
</dbReference>
<dbReference type="GO" id="GO:0006415">
    <property type="term" value="P:translational termination"/>
    <property type="evidence" value="ECO:0000318"/>
    <property type="project" value="GO_Central"/>
</dbReference>
<dbReference type="CDD" id="cd02440">
    <property type="entry name" value="AdoMet_MTases"/>
    <property type="match status" value="1"/>
</dbReference>
<dbReference type="Gene3D" id="1.10.8.10">
    <property type="entry name" value="DNA helicase RuvA subunit, C-terminal domain"/>
    <property type="match status" value="1"/>
</dbReference>
<dbReference type="Gene3D" id="3.40.50.150">
    <property type="entry name" value="Vaccinia Virus protein VP39"/>
    <property type="match status" value="1"/>
</dbReference>
<dbReference type="HAMAP" id="MF_02126">
    <property type="entry name" value="RF_methyltr_PrmC"/>
    <property type="match status" value="1"/>
</dbReference>
<dbReference type="InterPro" id="IPR002052">
    <property type="entry name" value="DNA_methylase_N6_adenine_CS"/>
</dbReference>
<dbReference type="InterPro" id="IPR004556">
    <property type="entry name" value="HemK-like"/>
</dbReference>
<dbReference type="InterPro" id="IPR050320">
    <property type="entry name" value="N5-glutamine_MTase"/>
</dbReference>
<dbReference type="InterPro" id="IPR040758">
    <property type="entry name" value="PrmC_N"/>
</dbReference>
<dbReference type="InterPro" id="IPR019874">
    <property type="entry name" value="RF_methyltr_PrmC"/>
</dbReference>
<dbReference type="InterPro" id="IPR029063">
    <property type="entry name" value="SAM-dependent_MTases_sf"/>
</dbReference>
<dbReference type="InterPro" id="IPR007848">
    <property type="entry name" value="Small_mtfrase_dom"/>
</dbReference>
<dbReference type="NCBIfam" id="TIGR00536">
    <property type="entry name" value="hemK_fam"/>
    <property type="match status" value="1"/>
</dbReference>
<dbReference type="NCBIfam" id="TIGR03534">
    <property type="entry name" value="RF_mod_PrmC"/>
    <property type="match status" value="1"/>
</dbReference>
<dbReference type="PANTHER" id="PTHR18895">
    <property type="entry name" value="HEMK METHYLTRANSFERASE"/>
    <property type="match status" value="1"/>
</dbReference>
<dbReference type="PANTHER" id="PTHR18895:SF74">
    <property type="entry name" value="MTRF1L RELEASE FACTOR GLUTAMINE METHYLTRANSFERASE"/>
    <property type="match status" value="1"/>
</dbReference>
<dbReference type="Pfam" id="PF05175">
    <property type="entry name" value="MTS"/>
    <property type="match status" value="1"/>
</dbReference>
<dbReference type="Pfam" id="PF17827">
    <property type="entry name" value="PrmC_N"/>
    <property type="match status" value="1"/>
</dbReference>
<dbReference type="SUPFAM" id="SSF53335">
    <property type="entry name" value="S-adenosyl-L-methionine-dependent methyltransferases"/>
    <property type="match status" value="1"/>
</dbReference>
<gene>
    <name evidence="1" type="primary">prmC</name>
    <name type="ordered locus">BT_3729</name>
</gene>
<protein>
    <recommendedName>
        <fullName evidence="1">Release factor glutamine methyltransferase</fullName>
        <shortName evidence="1">RF MTase</shortName>
        <ecNumber evidence="1">2.1.1.297</ecNumber>
    </recommendedName>
    <alternativeName>
        <fullName evidence="1">N5-glutamine methyltransferase PrmC</fullName>
    </alternativeName>
    <alternativeName>
        <fullName evidence="1">Protein-(glutamine-N5) MTase PrmC</fullName>
    </alternativeName>
    <alternativeName>
        <fullName evidence="1">Protein-glutamine N-methyltransferase PrmC</fullName>
    </alternativeName>
</protein>
<organism>
    <name type="scientific">Bacteroides thetaiotaomicron (strain ATCC 29148 / DSM 2079 / JCM 5827 / CCUG 10774 / NCTC 10582 / VPI-5482 / E50)</name>
    <dbReference type="NCBI Taxonomy" id="226186"/>
    <lineage>
        <taxon>Bacteria</taxon>
        <taxon>Pseudomonadati</taxon>
        <taxon>Bacteroidota</taxon>
        <taxon>Bacteroidia</taxon>
        <taxon>Bacteroidales</taxon>
        <taxon>Bacteroidaceae</taxon>
        <taxon>Bacteroides</taxon>
    </lineage>
</organism>
<proteinExistence type="inferred from homology"/>
<name>PRMC_BACTN</name>
<keyword id="KW-0489">Methyltransferase</keyword>
<keyword id="KW-1185">Reference proteome</keyword>
<keyword id="KW-0949">S-adenosyl-L-methionine</keyword>
<keyword id="KW-0808">Transferase</keyword>
<accession>Q8A1D7</accession>
<feature type="chain" id="PRO_0000414501" description="Release factor glutamine methyltransferase">
    <location>
        <begin position="1"/>
        <end position="278"/>
    </location>
</feature>
<feature type="binding site" evidence="1">
    <location>
        <begin position="117"/>
        <end position="121"/>
    </location>
    <ligand>
        <name>S-adenosyl-L-methionine</name>
        <dbReference type="ChEBI" id="CHEBI:59789"/>
    </ligand>
</feature>
<feature type="binding site" evidence="1">
    <location>
        <position position="140"/>
    </location>
    <ligand>
        <name>S-adenosyl-L-methionine</name>
        <dbReference type="ChEBI" id="CHEBI:59789"/>
    </ligand>
</feature>
<feature type="binding site" evidence="1">
    <location>
        <begin position="184"/>
        <end position="187"/>
    </location>
    <ligand>
        <name>substrate</name>
    </ligand>
</feature>
<feature type="binding site" evidence="1">
    <location>
        <position position="184"/>
    </location>
    <ligand>
        <name>S-adenosyl-L-methionine</name>
        <dbReference type="ChEBI" id="CHEBI:59789"/>
    </ligand>
</feature>
<comment type="function">
    <text evidence="1">Methylates the class 1 translation termination release factors RF1/PrfA and RF2/PrfB on the glutamine residue of the universally conserved GGQ motif.</text>
</comment>
<comment type="catalytic activity">
    <reaction evidence="1">
        <text>L-glutaminyl-[peptide chain release factor] + S-adenosyl-L-methionine = N(5)-methyl-L-glutaminyl-[peptide chain release factor] + S-adenosyl-L-homocysteine + H(+)</text>
        <dbReference type="Rhea" id="RHEA:42896"/>
        <dbReference type="Rhea" id="RHEA-COMP:10271"/>
        <dbReference type="Rhea" id="RHEA-COMP:10272"/>
        <dbReference type="ChEBI" id="CHEBI:15378"/>
        <dbReference type="ChEBI" id="CHEBI:30011"/>
        <dbReference type="ChEBI" id="CHEBI:57856"/>
        <dbReference type="ChEBI" id="CHEBI:59789"/>
        <dbReference type="ChEBI" id="CHEBI:61891"/>
        <dbReference type="EC" id="2.1.1.297"/>
    </reaction>
</comment>
<comment type="similarity">
    <text evidence="1">Belongs to the protein N5-glutamine methyltransferase family. PrmC subfamily.</text>
</comment>